<accession>A8A0F2</accession>
<name>TUS_ECOHS</name>
<gene>
    <name evidence="1" type="primary">tus</name>
    <name type="ordered locus">EcHS_A1685</name>
</gene>
<keyword id="KW-0963">Cytoplasm</keyword>
<keyword id="KW-0235">DNA replication</keyword>
<keyword id="KW-0238">DNA-binding</keyword>
<organism>
    <name type="scientific">Escherichia coli O9:H4 (strain HS)</name>
    <dbReference type="NCBI Taxonomy" id="331112"/>
    <lineage>
        <taxon>Bacteria</taxon>
        <taxon>Pseudomonadati</taxon>
        <taxon>Pseudomonadota</taxon>
        <taxon>Gammaproteobacteria</taxon>
        <taxon>Enterobacterales</taxon>
        <taxon>Enterobacteriaceae</taxon>
        <taxon>Escherichia</taxon>
    </lineage>
</organism>
<protein>
    <recommendedName>
        <fullName evidence="1">DNA replication terminus site-binding protein</fullName>
        <shortName evidence="1">Ter-binding protein</shortName>
    </recommendedName>
</protein>
<evidence type="ECO:0000255" key="1">
    <source>
        <dbReference type="HAMAP-Rule" id="MF_00483"/>
    </source>
</evidence>
<proteinExistence type="inferred from homology"/>
<comment type="function">
    <text evidence="1">Trans-acting protein required for termination of DNA replication. Binds to DNA replication terminator sequences (terA to terF) to prevent the passage of replication forks. The termination efficiency will be affected by the affinity of this protein for the terminator sequence.</text>
</comment>
<comment type="subcellular location">
    <subcellularLocation>
        <location evidence="1">Cytoplasm</location>
    </subcellularLocation>
</comment>
<comment type="similarity">
    <text evidence="1">Belongs to the Tus family.</text>
</comment>
<feature type="chain" id="PRO_1000060426" description="DNA replication terminus site-binding protein">
    <location>
        <begin position="1"/>
        <end position="309"/>
    </location>
</feature>
<dbReference type="EMBL" id="CP000802">
    <property type="protein sequence ID" value="ABV06006.1"/>
    <property type="molecule type" value="Genomic_DNA"/>
</dbReference>
<dbReference type="RefSeq" id="WP_001295399.1">
    <property type="nucleotide sequence ID" value="NC_009800.1"/>
</dbReference>
<dbReference type="SMR" id="A8A0F2"/>
<dbReference type="GeneID" id="93775758"/>
<dbReference type="KEGG" id="ecx:EcHS_A1685"/>
<dbReference type="HOGENOM" id="CLU_078181_0_0_6"/>
<dbReference type="GO" id="GO:0005737">
    <property type="term" value="C:cytoplasm"/>
    <property type="evidence" value="ECO:0007669"/>
    <property type="project" value="UniProtKB-SubCell"/>
</dbReference>
<dbReference type="GO" id="GO:0003677">
    <property type="term" value="F:DNA binding"/>
    <property type="evidence" value="ECO:0007669"/>
    <property type="project" value="UniProtKB-UniRule"/>
</dbReference>
<dbReference type="GO" id="GO:0006274">
    <property type="term" value="P:DNA replication termination"/>
    <property type="evidence" value="ECO:0007669"/>
    <property type="project" value="UniProtKB-UniRule"/>
</dbReference>
<dbReference type="Gene3D" id="3.30.54.10">
    <property type="match status" value="1"/>
</dbReference>
<dbReference type="Gene3D" id="3.50.14.10">
    <property type="entry name" value="Replication terminator Tus, domain 1 superfamily/Replication terminator Tus"/>
    <property type="match status" value="1"/>
</dbReference>
<dbReference type="HAMAP" id="MF_00483">
    <property type="entry name" value="Rep_term_Tus"/>
    <property type="match status" value="1"/>
</dbReference>
<dbReference type="InterPro" id="IPR008865">
    <property type="entry name" value="DNA_replication_term_site-bd"/>
</dbReference>
<dbReference type="InterPro" id="IPR036381">
    <property type="entry name" value="Tus_dom1"/>
</dbReference>
<dbReference type="InterPro" id="IPR036384">
    <property type="entry name" value="Tus_sf"/>
</dbReference>
<dbReference type="NCBIfam" id="TIGR02648">
    <property type="entry name" value="rep_term_tus"/>
    <property type="match status" value="1"/>
</dbReference>
<dbReference type="Pfam" id="PF05472">
    <property type="entry name" value="Ter"/>
    <property type="match status" value="1"/>
</dbReference>
<dbReference type="SUPFAM" id="SSF56596">
    <property type="entry name" value="Replication terminator protein (Tus)"/>
    <property type="match status" value="1"/>
</dbReference>
<sequence>MARYDLVDRLNTTFRQMEQELAAFAAHLEQHKLLVARVFSLPEVKKEDEHNPLNRIEVKQHLGNDAQSLALRHFRHLFIQQQSENRSSKAAVRLPGVLCYQVDNLSQAALVSHIQHINKLKTTFEHIVTVESELPTAARFEWVHRHLPGLITLNAYRTLTVLHDPATLRFGWANKHIIKNLHRDEVLAQLEKSLKSPRSVAPWTREEWQRKLEREYQDIAALPQNAKLKIKRPVKVQPIARVWYKGDQKQVQHACPTPLIALINRDNGAGVPDVGELLNYDADNVQHRYKPQAQPLRLIIPRLHLYVAD</sequence>
<reference key="1">
    <citation type="journal article" date="2008" name="J. Bacteriol.">
        <title>The pangenome structure of Escherichia coli: comparative genomic analysis of E. coli commensal and pathogenic isolates.</title>
        <authorList>
            <person name="Rasko D.A."/>
            <person name="Rosovitz M.J."/>
            <person name="Myers G.S.A."/>
            <person name="Mongodin E.F."/>
            <person name="Fricke W.F."/>
            <person name="Gajer P."/>
            <person name="Crabtree J."/>
            <person name="Sebaihia M."/>
            <person name="Thomson N.R."/>
            <person name="Chaudhuri R."/>
            <person name="Henderson I.R."/>
            <person name="Sperandio V."/>
            <person name="Ravel J."/>
        </authorList>
    </citation>
    <scope>NUCLEOTIDE SEQUENCE [LARGE SCALE GENOMIC DNA]</scope>
    <source>
        <strain>HS</strain>
    </source>
</reference>